<reference key="1">
    <citation type="journal article" date="2000" name="Nature">
        <title>Sequence and analysis of chromosome 3 of the plant Arabidopsis thaliana.</title>
        <authorList>
            <person name="Salanoubat M."/>
            <person name="Lemcke K."/>
            <person name="Rieger M."/>
            <person name="Ansorge W."/>
            <person name="Unseld M."/>
            <person name="Fartmann B."/>
            <person name="Valle G."/>
            <person name="Bloecker H."/>
            <person name="Perez-Alonso M."/>
            <person name="Obermaier B."/>
            <person name="Delseny M."/>
            <person name="Boutry M."/>
            <person name="Grivell L.A."/>
            <person name="Mache R."/>
            <person name="Puigdomenech P."/>
            <person name="De Simone V."/>
            <person name="Choisne N."/>
            <person name="Artiguenave F."/>
            <person name="Robert C."/>
            <person name="Brottier P."/>
            <person name="Wincker P."/>
            <person name="Cattolico L."/>
            <person name="Weissenbach J."/>
            <person name="Saurin W."/>
            <person name="Quetier F."/>
            <person name="Schaefer M."/>
            <person name="Mueller-Auer S."/>
            <person name="Gabel C."/>
            <person name="Fuchs M."/>
            <person name="Benes V."/>
            <person name="Wurmbach E."/>
            <person name="Drzonek H."/>
            <person name="Erfle H."/>
            <person name="Jordan N."/>
            <person name="Bangert S."/>
            <person name="Wiedelmann R."/>
            <person name="Kranz H."/>
            <person name="Voss H."/>
            <person name="Holland R."/>
            <person name="Brandt P."/>
            <person name="Nyakatura G."/>
            <person name="Vezzi A."/>
            <person name="D'Angelo M."/>
            <person name="Pallavicini A."/>
            <person name="Toppo S."/>
            <person name="Simionati B."/>
            <person name="Conrad A."/>
            <person name="Hornischer K."/>
            <person name="Kauer G."/>
            <person name="Loehnert T.-H."/>
            <person name="Nordsiek G."/>
            <person name="Reichelt J."/>
            <person name="Scharfe M."/>
            <person name="Schoen O."/>
            <person name="Bargues M."/>
            <person name="Terol J."/>
            <person name="Climent J."/>
            <person name="Navarro P."/>
            <person name="Collado C."/>
            <person name="Perez-Perez A."/>
            <person name="Ottenwaelder B."/>
            <person name="Duchemin D."/>
            <person name="Cooke R."/>
            <person name="Laudie M."/>
            <person name="Berger-Llauro C."/>
            <person name="Purnelle B."/>
            <person name="Masuy D."/>
            <person name="de Haan M."/>
            <person name="Maarse A.C."/>
            <person name="Alcaraz J.-P."/>
            <person name="Cottet A."/>
            <person name="Casacuberta E."/>
            <person name="Monfort A."/>
            <person name="Argiriou A."/>
            <person name="Flores M."/>
            <person name="Liguori R."/>
            <person name="Vitale D."/>
            <person name="Mannhaupt G."/>
            <person name="Haase D."/>
            <person name="Schoof H."/>
            <person name="Rudd S."/>
            <person name="Zaccaria P."/>
            <person name="Mewes H.-W."/>
            <person name="Mayer K.F.X."/>
            <person name="Kaul S."/>
            <person name="Town C.D."/>
            <person name="Koo H.L."/>
            <person name="Tallon L.J."/>
            <person name="Jenkins J."/>
            <person name="Rooney T."/>
            <person name="Rizzo M."/>
            <person name="Walts A."/>
            <person name="Utterback T."/>
            <person name="Fujii C.Y."/>
            <person name="Shea T.P."/>
            <person name="Creasy T.H."/>
            <person name="Haas B."/>
            <person name="Maiti R."/>
            <person name="Wu D."/>
            <person name="Peterson J."/>
            <person name="Van Aken S."/>
            <person name="Pai G."/>
            <person name="Militscher J."/>
            <person name="Sellers P."/>
            <person name="Gill J.E."/>
            <person name="Feldblyum T.V."/>
            <person name="Preuss D."/>
            <person name="Lin X."/>
            <person name="Nierman W.C."/>
            <person name="Salzberg S.L."/>
            <person name="White O."/>
            <person name="Venter J.C."/>
            <person name="Fraser C.M."/>
            <person name="Kaneko T."/>
            <person name="Nakamura Y."/>
            <person name="Sato S."/>
            <person name="Kato T."/>
            <person name="Asamizu E."/>
            <person name="Sasamoto S."/>
            <person name="Kimura T."/>
            <person name="Idesawa K."/>
            <person name="Kawashima K."/>
            <person name="Kishida Y."/>
            <person name="Kiyokawa C."/>
            <person name="Kohara M."/>
            <person name="Matsumoto M."/>
            <person name="Matsuno A."/>
            <person name="Muraki A."/>
            <person name="Nakayama S."/>
            <person name="Nakazaki N."/>
            <person name="Shinpo S."/>
            <person name="Takeuchi C."/>
            <person name="Wada T."/>
            <person name="Watanabe A."/>
            <person name="Yamada M."/>
            <person name="Yasuda M."/>
            <person name="Tabata S."/>
        </authorList>
    </citation>
    <scope>NUCLEOTIDE SEQUENCE [LARGE SCALE GENOMIC DNA]</scope>
    <source>
        <strain>cv. Columbia</strain>
    </source>
</reference>
<reference key="2">
    <citation type="journal article" date="2017" name="Plant J.">
        <title>Araport11: a complete reannotation of the Arabidopsis thaliana reference genome.</title>
        <authorList>
            <person name="Cheng C.Y."/>
            <person name="Krishnakumar V."/>
            <person name="Chan A.P."/>
            <person name="Thibaud-Nissen F."/>
            <person name="Schobel S."/>
            <person name="Town C.D."/>
        </authorList>
    </citation>
    <scope>GENOME REANNOTATION</scope>
    <source>
        <strain>cv. Columbia</strain>
    </source>
</reference>
<reference key="3">
    <citation type="journal article" date="2003" name="Science">
        <title>Empirical analysis of transcriptional activity in the Arabidopsis genome.</title>
        <authorList>
            <person name="Yamada K."/>
            <person name="Lim J."/>
            <person name="Dale J.M."/>
            <person name="Chen H."/>
            <person name="Shinn P."/>
            <person name="Palm C.J."/>
            <person name="Southwick A.M."/>
            <person name="Wu H.C."/>
            <person name="Kim C.J."/>
            <person name="Nguyen M."/>
            <person name="Pham P.K."/>
            <person name="Cheuk R.F."/>
            <person name="Karlin-Newmann G."/>
            <person name="Liu S.X."/>
            <person name="Lam B."/>
            <person name="Sakano H."/>
            <person name="Wu T."/>
            <person name="Yu G."/>
            <person name="Miranda M."/>
            <person name="Quach H.L."/>
            <person name="Tripp M."/>
            <person name="Chang C.H."/>
            <person name="Lee J.M."/>
            <person name="Toriumi M.J."/>
            <person name="Chan M.M."/>
            <person name="Tang C.C."/>
            <person name="Onodera C.S."/>
            <person name="Deng J.M."/>
            <person name="Akiyama K."/>
            <person name="Ansari Y."/>
            <person name="Arakawa T."/>
            <person name="Banh J."/>
            <person name="Banno F."/>
            <person name="Bowser L."/>
            <person name="Brooks S.Y."/>
            <person name="Carninci P."/>
            <person name="Chao Q."/>
            <person name="Choy N."/>
            <person name="Enju A."/>
            <person name="Goldsmith A.D."/>
            <person name="Gurjal M."/>
            <person name="Hansen N.F."/>
            <person name="Hayashizaki Y."/>
            <person name="Johnson-Hopson C."/>
            <person name="Hsuan V.W."/>
            <person name="Iida K."/>
            <person name="Karnes M."/>
            <person name="Khan S."/>
            <person name="Koesema E."/>
            <person name="Ishida J."/>
            <person name="Jiang P.X."/>
            <person name="Jones T."/>
            <person name="Kawai J."/>
            <person name="Kamiya A."/>
            <person name="Meyers C."/>
            <person name="Nakajima M."/>
            <person name="Narusaka M."/>
            <person name="Seki M."/>
            <person name="Sakurai T."/>
            <person name="Satou M."/>
            <person name="Tamse R."/>
            <person name="Vaysberg M."/>
            <person name="Wallender E.K."/>
            <person name="Wong C."/>
            <person name="Yamamura Y."/>
            <person name="Yuan S."/>
            <person name="Shinozaki K."/>
            <person name="Davis R.W."/>
            <person name="Theologis A."/>
            <person name="Ecker J.R."/>
        </authorList>
    </citation>
    <scope>NUCLEOTIDE SEQUENCE [LARGE SCALE MRNA] (ISOFORM 1)</scope>
    <source>
        <strain>cv. Columbia</strain>
    </source>
</reference>
<reference key="4">
    <citation type="submission" date="2002-03" db="EMBL/GenBank/DDBJ databases">
        <title>Full-length cDNA from Arabidopsis thaliana.</title>
        <authorList>
            <person name="Brover V.V."/>
            <person name="Troukhan M.E."/>
            <person name="Alexandrov N.A."/>
            <person name="Lu Y.-P."/>
            <person name="Flavell R.B."/>
            <person name="Feldmann K.A."/>
        </authorList>
    </citation>
    <scope>NUCLEOTIDE SEQUENCE [LARGE SCALE MRNA] (ISOFORM 1)</scope>
</reference>
<reference key="5">
    <citation type="journal article" date="2009" name="New Phytol.">
        <title>A functional analysis of the pyrimidine catabolic pathway in Arabidopsis.</title>
        <authorList>
            <person name="Zrenner R."/>
            <person name="Riegler H."/>
            <person name="Marquard C.R."/>
            <person name="Lange P.R."/>
            <person name="Geserick C."/>
            <person name="Bartosz C.E."/>
            <person name="Chen C.T."/>
            <person name="Slocum R.D."/>
        </authorList>
    </citation>
    <scope>DEVELOPMENTAL STAGE</scope>
    <scope>INDUCTION</scope>
</reference>
<reference key="6">
    <citation type="journal article" date="2009" name="Plant J.">
        <title>Uracil salvage is necessary for early Arabidopsis development.</title>
        <authorList>
            <person name="Mainguet S.E."/>
            <person name="Gakiere B."/>
            <person name="Majira A."/>
            <person name="Pelletier S."/>
            <person name="Bringel F."/>
            <person name="Guerard F."/>
            <person name="Caboche M."/>
            <person name="Berthome R."/>
            <person name="Renou J.P."/>
        </authorList>
    </citation>
    <scope>FUNCTION</scope>
    <scope>CATALYTIC ACTIVITY</scope>
    <scope>DISRUPTION PHENOTYPE</scope>
    <scope>GENE FAMILY</scope>
    <scope>NOMENCLATURE</scope>
</reference>
<reference key="7">
    <citation type="journal article" date="2012" name="Mol. Cell. Proteomics">
        <title>Comparative large-scale characterisation of plant vs. mammal proteins reveals similar and idiosyncratic N-alpha acetylation features.</title>
        <authorList>
            <person name="Bienvenut W.V."/>
            <person name="Sumpton D."/>
            <person name="Martinez A."/>
            <person name="Lilla S."/>
            <person name="Espagne C."/>
            <person name="Meinnel T."/>
            <person name="Giglione C."/>
        </authorList>
    </citation>
    <scope>ACETYLATION [LARGE SCALE ANALYSIS] AT ALA-2 (ISOFORM 2)</scope>
    <scope>CLEAVAGE OF INITIATOR METHIONINE [LARGE SCALE ANALYSIS] (ISOFORM 2)</scope>
    <scope>IDENTIFICATION BY MASS SPECTROMETRY [LARGE SCALE ANALYSIS]</scope>
</reference>
<proteinExistence type="evidence at protein level"/>
<protein>
    <recommendedName>
        <fullName>Uracil phosphoribosyltransferase, chloroplastic</fullName>
        <shortName>UPRTase</shortName>
        <ecNumber evidence="4">2.4.2.9</ecNumber>
    </recommendedName>
    <alternativeName>
        <fullName>UMP pyrophosphorylase</fullName>
    </alternativeName>
</protein>
<comment type="function">
    <text evidence="4">Uracil phosphoribosyltransferase (UPRT) that catalyzes the conversion of uracil and 5-phospho-alpha-D-ribose 1-diphosphate (PRPP) to UMP and diphosphate. Is probably the only functional UPRT, since the dual-domain proteins of the UKL family seem to lack this activity.</text>
</comment>
<comment type="catalytic activity">
    <reaction evidence="4">
        <text>UMP + diphosphate = 5-phospho-alpha-D-ribose 1-diphosphate + uracil</text>
        <dbReference type="Rhea" id="RHEA:13017"/>
        <dbReference type="ChEBI" id="CHEBI:17568"/>
        <dbReference type="ChEBI" id="CHEBI:33019"/>
        <dbReference type="ChEBI" id="CHEBI:57865"/>
        <dbReference type="ChEBI" id="CHEBI:58017"/>
        <dbReference type="EC" id="2.4.2.9"/>
    </reaction>
    <physiologicalReaction direction="right-to-left" evidence="6">
        <dbReference type="Rhea" id="RHEA:13019"/>
    </physiologicalReaction>
</comment>
<comment type="cofactor">
    <cofactor evidence="1">
        <name>Mg(2+)</name>
        <dbReference type="ChEBI" id="CHEBI:18420"/>
    </cofactor>
    <text evidence="1">Binds 1 Mg(2+) ion per subunit. The magnesium is bound as Mg-PRPP.</text>
</comment>
<comment type="activity regulation">
    <text evidence="1">Allosterically activated by GTP.</text>
</comment>
<comment type="pathway">
    <text>Pyrimidine metabolism; UMP biosynthesis via salvage pathway; UMP from uracil: step 1/1.</text>
</comment>
<comment type="subcellular location">
    <subcellularLocation>
        <location evidence="5">Plastid</location>
        <location evidence="5">Chloroplast</location>
    </subcellularLocation>
</comment>
<comment type="alternative products">
    <event type="alternative splicing"/>
    <isoform>
        <id>Q9M336-1</id>
        <name>1</name>
        <sequence type="displayed"/>
    </isoform>
    <isoform>
        <id>Q9M336-2</id>
        <name>2</name>
        <sequence type="described" ref="VSP_039281"/>
    </isoform>
</comment>
<comment type="developmental stage">
    <text evidence="3">Slightly induced 12 days after germination.</text>
</comment>
<comment type="induction">
    <text evidence="3">Up-regulated when pyrimidine catabolism is impaired.</text>
</comment>
<comment type="domain">
    <text>The N-terminal sequence (1-125) is sufficient to address heterologous proteins to chloroplasts.</text>
</comment>
<comment type="disruption phenotype">
    <text evidence="4">Growth retardation, pale-green to albino phenotype and flimsy roots with less branching. Loss of uracil phosphoribosyltransferase activity.</text>
</comment>
<comment type="similarity">
    <text evidence="5">Belongs to the UPRTase family.</text>
</comment>
<keyword id="KW-0007">Acetylation</keyword>
<keyword id="KW-0021">Allosteric enzyme</keyword>
<keyword id="KW-0025">Alternative splicing</keyword>
<keyword id="KW-0150">Chloroplast</keyword>
<keyword id="KW-0328">Glycosyltransferase</keyword>
<keyword id="KW-0342">GTP-binding</keyword>
<keyword id="KW-0547">Nucleotide-binding</keyword>
<keyword id="KW-0934">Plastid</keyword>
<keyword id="KW-1185">Reference proteome</keyword>
<keyword id="KW-0808">Transferase</keyword>
<keyword id="KW-0809">Transit peptide</keyword>
<sequence>MACSIGNAFRCSSDTLRFAPRQQCSSRLNPNPSSFLSFNSSPILAQNLGASSSSLSRRTIRARTKMAASEASINGSNRMLVFVPPHPLIKHWISVLRNEQTPCPVFRNAIAELGRLLMYEASREWLPTVVGEIMSPMGPASVEFIDPREPIAVVPILRAGLALAEHASSVLPANKIYHLGVSRDEKTLLPSVYLNKLPDEFPKNSRVFLVDPVLATGGTIMAAMDLLKERGLSVQQIKVICAIAAPPALSKLNEKFPGLHVYAGIIDPEVNEKGYIIPGLGDAGDRSFGTETHWVK</sequence>
<feature type="transit peptide" description="Chloroplast" evidence="2">
    <location>
        <begin position="1"/>
        <end position="61"/>
    </location>
</feature>
<feature type="chain" id="PRO_0000394518" description="Uracil phosphoribosyltransferase, chloroplastic">
    <location>
        <begin position="62"/>
        <end position="296"/>
    </location>
</feature>
<feature type="binding site" evidence="1">
    <location>
        <begin position="148"/>
        <end position="151"/>
    </location>
    <ligand>
        <name>GTP</name>
        <dbReference type="ChEBI" id="CHEBI:37565"/>
    </ligand>
</feature>
<feature type="binding site" evidence="1">
    <location>
        <position position="158"/>
    </location>
    <ligand>
        <name>5-phospho-alpha-D-ribose 1-diphosphate</name>
        <dbReference type="ChEBI" id="CHEBI:58017"/>
    </ligand>
</feature>
<feature type="binding site" evidence="1">
    <location>
        <position position="183"/>
    </location>
    <ligand>
        <name>5-phospho-alpha-D-ribose 1-diphosphate</name>
        <dbReference type="ChEBI" id="CHEBI:58017"/>
    </ligand>
</feature>
<feature type="binding site" evidence="1">
    <location>
        <position position="211"/>
    </location>
    <ligand>
        <name>5-phospho-alpha-D-ribose 1-diphosphate</name>
        <dbReference type="ChEBI" id="CHEBI:58017"/>
    </ligand>
</feature>
<feature type="binding site" evidence="1">
    <location>
        <begin position="216"/>
        <end position="219"/>
    </location>
    <ligand>
        <name>5-phospho-alpha-D-ribose 1-diphosphate</name>
        <dbReference type="ChEBI" id="CHEBI:58017"/>
    </ligand>
</feature>
<feature type="binding site" evidence="1">
    <location>
        <begin position="281"/>
        <end position="283"/>
    </location>
    <ligand>
        <name>uracil</name>
        <dbReference type="ChEBI" id="CHEBI:17568"/>
    </ligand>
</feature>
<feature type="binding site" evidence="1">
    <location>
        <position position="282"/>
    </location>
    <ligand>
        <name>5-phospho-alpha-D-ribose 1-diphosphate</name>
        <dbReference type="ChEBI" id="CHEBI:58017"/>
    </ligand>
</feature>
<feature type="splice variant" id="VSP_039281" description="In isoform 2." evidence="5">
    <location>
        <begin position="1"/>
        <end position="65"/>
    </location>
</feature>
<feature type="initiator methionine" description="Removed" evidence="7">
    <location sequence="Q9M336-2">
        <position position="1"/>
    </location>
</feature>
<feature type="modified residue" description="N-acetylalanine" evidence="7">
    <location sequence="Q9M336-2">
        <position position="2"/>
    </location>
</feature>
<dbReference type="EC" id="2.4.2.9" evidence="4"/>
<dbReference type="EMBL" id="AL132960">
    <property type="protein sequence ID" value="CAB88352.1"/>
    <property type="molecule type" value="Genomic_DNA"/>
</dbReference>
<dbReference type="EMBL" id="CP002686">
    <property type="protein sequence ID" value="AEE79156.1"/>
    <property type="molecule type" value="Genomic_DNA"/>
</dbReference>
<dbReference type="EMBL" id="CP002686">
    <property type="protein sequence ID" value="AEE79157.1"/>
    <property type="molecule type" value="Genomic_DNA"/>
</dbReference>
<dbReference type="EMBL" id="AY056189">
    <property type="protein sequence ID" value="AAL07038.1"/>
    <property type="molecule type" value="mRNA"/>
</dbReference>
<dbReference type="EMBL" id="AY113998">
    <property type="protein sequence ID" value="AAM45046.1"/>
    <property type="molecule type" value="mRNA"/>
</dbReference>
<dbReference type="EMBL" id="AY084756">
    <property type="protein sequence ID" value="AAM61325.1"/>
    <property type="molecule type" value="mRNA"/>
</dbReference>
<dbReference type="PIR" id="T45930">
    <property type="entry name" value="T45930"/>
</dbReference>
<dbReference type="RefSeq" id="NP_190958.1">
    <molecule id="Q9M336-1"/>
    <property type="nucleotide sequence ID" value="NM_115250.3"/>
</dbReference>
<dbReference type="RefSeq" id="NP_850699.1">
    <molecule id="Q9M336-2"/>
    <property type="nucleotide sequence ID" value="NM_180368.2"/>
</dbReference>
<dbReference type="SMR" id="Q9M336"/>
<dbReference type="BioGRID" id="9874">
    <property type="interactions" value="14"/>
</dbReference>
<dbReference type="FunCoup" id="Q9M336">
    <property type="interactions" value="2000"/>
</dbReference>
<dbReference type="IntAct" id="Q9M336">
    <property type="interactions" value="14"/>
</dbReference>
<dbReference type="STRING" id="3702.Q9M336"/>
<dbReference type="iPTMnet" id="Q9M336"/>
<dbReference type="PaxDb" id="3702-AT3G53900.2"/>
<dbReference type="ProteomicsDB" id="228537">
    <molecule id="Q9M336-1"/>
</dbReference>
<dbReference type="EnsemblPlants" id="AT3G53900.1">
    <molecule id="Q9M336-2"/>
    <property type="protein sequence ID" value="AT3G53900.1"/>
    <property type="gene ID" value="AT3G53900"/>
</dbReference>
<dbReference type="EnsemblPlants" id="AT3G53900.2">
    <molecule id="Q9M336-1"/>
    <property type="protein sequence ID" value="AT3G53900.2"/>
    <property type="gene ID" value="AT3G53900"/>
</dbReference>
<dbReference type="GeneID" id="824557"/>
<dbReference type="Gramene" id="AT3G53900.1">
    <molecule id="Q9M336-2"/>
    <property type="protein sequence ID" value="AT3G53900.1"/>
    <property type="gene ID" value="AT3G53900"/>
</dbReference>
<dbReference type="Gramene" id="AT3G53900.2">
    <molecule id="Q9M336-1"/>
    <property type="protein sequence ID" value="AT3G53900.2"/>
    <property type="gene ID" value="AT3G53900"/>
</dbReference>
<dbReference type="KEGG" id="ath:AT3G53900"/>
<dbReference type="Araport" id="AT3G53900"/>
<dbReference type="TAIR" id="AT3G53900">
    <property type="gene designation" value="UPP"/>
</dbReference>
<dbReference type="eggNOG" id="KOG4203">
    <property type="taxonomic scope" value="Eukaryota"/>
</dbReference>
<dbReference type="HOGENOM" id="CLU_067096_0_0_1"/>
<dbReference type="InParanoid" id="Q9M336"/>
<dbReference type="OrthoDB" id="106623at2759"/>
<dbReference type="PhylomeDB" id="Q9M336"/>
<dbReference type="BioCyc" id="ARA:AT3G53900-MONOMER"/>
<dbReference type="BioCyc" id="MetaCyc:AT3G53900-MONOMER"/>
<dbReference type="BRENDA" id="2.4.2.9">
    <property type="organism ID" value="399"/>
</dbReference>
<dbReference type="SABIO-RK" id="Q9M336"/>
<dbReference type="UniPathway" id="UPA00574">
    <property type="reaction ID" value="UER00636"/>
</dbReference>
<dbReference type="CD-CODE" id="4299E36E">
    <property type="entry name" value="Nucleolus"/>
</dbReference>
<dbReference type="PRO" id="PR:Q9M336"/>
<dbReference type="Proteomes" id="UP000006548">
    <property type="component" value="Chromosome 3"/>
</dbReference>
<dbReference type="ExpressionAtlas" id="Q9M336">
    <property type="expression patterns" value="baseline and differential"/>
</dbReference>
<dbReference type="GO" id="GO:0009507">
    <property type="term" value="C:chloroplast"/>
    <property type="evidence" value="ECO:0007005"/>
    <property type="project" value="TAIR"/>
</dbReference>
<dbReference type="GO" id="GO:0009570">
    <property type="term" value="C:chloroplast stroma"/>
    <property type="evidence" value="ECO:0007005"/>
    <property type="project" value="TAIR"/>
</dbReference>
<dbReference type="GO" id="GO:0005829">
    <property type="term" value="C:cytosol"/>
    <property type="evidence" value="ECO:0007005"/>
    <property type="project" value="TAIR"/>
</dbReference>
<dbReference type="GO" id="GO:0009536">
    <property type="term" value="C:plastid"/>
    <property type="evidence" value="ECO:0000314"/>
    <property type="project" value="TAIR"/>
</dbReference>
<dbReference type="GO" id="GO:0005525">
    <property type="term" value="F:GTP binding"/>
    <property type="evidence" value="ECO:0007669"/>
    <property type="project" value="UniProtKB-KW"/>
</dbReference>
<dbReference type="GO" id="GO:0004845">
    <property type="term" value="F:uracil phosphoribosyltransferase activity"/>
    <property type="evidence" value="ECO:0000315"/>
    <property type="project" value="TAIR"/>
</dbReference>
<dbReference type="GO" id="GO:0016036">
    <property type="term" value="P:cellular response to phosphate starvation"/>
    <property type="evidence" value="ECO:0000270"/>
    <property type="project" value="TAIR"/>
</dbReference>
<dbReference type="GO" id="GO:0032502">
    <property type="term" value="P:developmental process"/>
    <property type="evidence" value="ECO:0000315"/>
    <property type="project" value="TAIR"/>
</dbReference>
<dbReference type="GO" id="GO:0044206">
    <property type="term" value="P:UMP salvage"/>
    <property type="evidence" value="ECO:0007669"/>
    <property type="project" value="UniProtKB-UniPathway"/>
</dbReference>
<dbReference type="GO" id="GO:0006223">
    <property type="term" value="P:uracil salvage"/>
    <property type="evidence" value="ECO:0007669"/>
    <property type="project" value="InterPro"/>
</dbReference>
<dbReference type="CDD" id="cd06223">
    <property type="entry name" value="PRTases_typeI"/>
    <property type="match status" value="1"/>
</dbReference>
<dbReference type="FunFam" id="3.40.50.2020:FF:000003">
    <property type="entry name" value="Uracil phosphoribosyltransferase"/>
    <property type="match status" value="1"/>
</dbReference>
<dbReference type="Gene3D" id="3.40.50.2020">
    <property type="match status" value="1"/>
</dbReference>
<dbReference type="InterPro" id="IPR000836">
    <property type="entry name" value="PRibTrfase_dom"/>
</dbReference>
<dbReference type="InterPro" id="IPR029057">
    <property type="entry name" value="PRTase-like"/>
</dbReference>
<dbReference type="InterPro" id="IPR050054">
    <property type="entry name" value="UPRTase/APRTase"/>
</dbReference>
<dbReference type="InterPro" id="IPR005765">
    <property type="entry name" value="Ura_phspho_trans"/>
</dbReference>
<dbReference type="NCBIfam" id="NF001097">
    <property type="entry name" value="PRK00129.1"/>
    <property type="match status" value="1"/>
</dbReference>
<dbReference type="NCBIfam" id="TIGR01091">
    <property type="entry name" value="upp"/>
    <property type="match status" value="1"/>
</dbReference>
<dbReference type="PANTHER" id="PTHR32315">
    <property type="entry name" value="ADENINE PHOSPHORIBOSYLTRANSFERASE"/>
    <property type="match status" value="1"/>
</dbReference>
<dbReference type="PANTHER" id="PTHR32315:SF4">
    <property type="entry name" value="URACIL PHOSPHORIBOSYLTRANSFERASE, CHLOROPLASTIC"/>
    <property type="match status" value="1"/>
</dbReference>
<dbReference type="Pfam" id="PF14681">
    <property type="entry name" value="UPRTase"/>
    <property type="match status" value="1"/>
</dbReference>
<dbReference type="SUPFAM" id="SSF53271">
    <property type="entry name" value="PRTase-like"/>
    <property type="match status" value="1"/>
</dbReference>
<accession>Q9M336</accession>
<accession>Q3EAK0</accession>
<accession>Q8LFM4</accession>
<name>UPP_ARATH</name>
<evidence type="ECO:0000250" key="1"/>
<evidence type="ECO:0000255" key="2"/>
<evidence type="ECO:0000269" key="3">
    <source>
    </source>
</evidence>
<evidence type="ECO:0000269" key="4">
    <source>
    </source>
</evidence>
<evidence type="ECO:0000305" key="5"/>
<evidence type="ECO:0000305" key="6">
    <source>
    </source>
</evidence>
<evidence type="ECO:0007744" key="7">
    <source>
    </source>
</evidence>
<organism>
    <name type="scientific">Arabidopsis thaliana</name>
    <name type="common">Mouse-ear cress</name>
    <dbReference type="NCBI Taxonomy" id="3702"/>
    <lineage>
        <taxon>Eukaryota</taxon>
        <taxon>Viridiplantae</taxon>
        <taxon>Streptophyta</taxon>
        <taxon>Embryophyta</taxon>
        <taxon>Tracheophyta</taxon>
        <taxon>Spermatophyta</taxon>
        <taxon>Magnoliopsida</taxon>
        <taxon>eudicotyledons</taxon>
        <taxon>Gunneridae</taxon>
        <taxon>Pentapetalae</taxon>
        <taxon>rosids</taxon>
        <taxon>malvids</taxon>
        <taxon>Brassicales</taxon>
        <taxon>Brassicaceae</taxon>
        <taxon>Camelineae</taxon>
        <taxon>Arabidopsis</taxon>
    </lineage>
</organism>
<gene>
    <name type="primary">UPP</name>
    <name type="synonym">PYRR</name>
    <name type="ordered locus">At3g53900</name>
    <name type="ORF">F5K20.200</name>
</gene>